<protein>
    <recommendedName>
        <fullName>Beta-glucosidase 24</fullName>
        <shortName>Os6bglu24</shortName>
        <ecNumber evidence="2">3.2.1.21</ecNumber>
    </recommendedName>
</protein>
<gene>
    <name type="primary">BGLU24</name>
    <name type="ordered locus">Os06g0320200</name>
    <name type="ordered locus">LOC_Os06g21570</name>
    <name type="ORF">OsJ_21154</name>
    <name type="ORF">P0592B08.35</name>
</gene>
<feature type="signal peptide" evidence="5">
    <location>
        <begin position="1"/>
        <end position="18"/>
    </location>
</feature>
<feature type="chain" id="PRO_0000390341" description="Beta-glucosidase 24">
    <location>
        <begin position="19"/>
        <end position="504"/>
    </location>
</feature>
<feature type="active site" description="Proton donor" evidence="3">
    <location>
        <position position="197"/>
    </location>
</feature>
<feature type="active site" description="Nucleophile" evidence="3">
    <location>
        <position position="411"/>
    </location>
</feature>
<feature type="binding site" evidence="3">
    <location>
        <position position="47"/>
    </location>
    <ligand>
        <name>a beta-D-glucoside</name>
        <dbReference type="ChEBI" id="CHEBI:22798"/>
    </ligand>
</feature>
<feature type="binding site" evidence="3">
    <location>
        <position position="151"/>
    </location>
    <ligand>
        <name>a beta-D-glucoside</name>
        <dbReference type="ChEBI" id="CHEBI:22798"/>
    </ligand>
</feature>
<feature type="binding site" evidence="3">
    <location>
        <begin position="196"/>
        <end position="197"/>
    </location>
    <ligand>
        <name>a beta-D-glucoside</name>
        <dbReference type="ChEBI" id="CHEBI:22798"/>
    </ligand>
</feature>
<feature type="binding site" evidence="3">
    <location>
        <position position="340"/>
    </location>
    <ligand>
        <name>a beta-D-glucoside</name>
        <dbReference type="ChEBI" id="CHEBI:22798"/>
    </ligand>
</feature>
<feature type="binding site" evidence="4">
    <location>
        <position position="411"/>
    </location>
    <ligand>
        <name>a beta-D-glucoside</name>
        <dbReference type="ChEBI" id="CHEBI:22798"/>
    </ligand>
</feature>
<feature type="binding site" evidence="3">
    <location>
        <position position="460"/>
    </location>
    <ligand>
        <name>a beta-D-glucoside</name>
        <dbReference type="ChEBI" id="CHEBI:22798"/>
    </ligand>
</feature>
<feature type="binding site" evidence="3">
    <location>
        <begin position="467"/>
        <end position="468"/>
    </location>
    <ligand>
        <name>a beta-D-glucoside</name>
        <dbReference type="ChEBI" id="CHEBI:22798"/>
    </ligand>
</feature>
<feature type="binding site" evidence="1">
    <location>
        <position position="476"/>
    </location>
    <ligand>
        <name>a beta-D-glucoside</name>
        <dbReference type="ChEBI" id="CHEBI:22798"/>
    </ligand>
</feature>
<feature type="glycosylation site" description="N-linked (GlcNAc...) asparagine" evidence="6">
    <location>
        <position position="75"/>
    </location>
</feature>
<feature type="glycosylation site" description="N-linked (GlcNAc...) asparagine" evidence="6">
    <location>
        <position position="329"/>
    </location>
</feature>
<feature type="glycosylation site" description="N-linked (GlcNAc...) asparagine" evidence="6">
    <location>
        <position position="371"/>
    </location>
</feature>
<feature type="glycosylation site" description="N-linked (GlcNAc...) asparagine" evidence="6">
    <location>
        <position position="421"/>
    </location>
</feature>
<feature type="disulfide bond" evidence="3">
    <location>
        <begin position="216"/>
        <end position="224"/>
    </location>
</feature>
<name>BGL24_ORYSJ</name>
<proteinExistence type="evidence at transcript level"/>
<reference key="1">
    <citation type="journal article" date="2005" name="Nature">
        <title>The map-based sequence of the rice genome.</title>
        <authorList>
            <consortium name="International rice genome sequencing project (IRGSP)"/>
        </authorList>
    </citation>
    <scope>NUCLEOTIDE SEQUENCE [LARGE SCALE GENOMIC DNA]</scope>
    <source>
        <strain>cv. Nipponbare</strain>
    </source>
</reference>
<reference key="2">
    <citation type="journal article" date="2008" name="Nucleic Acids Res.">
        <title>The rice annotation project database (RAP-DB): 2008 update.</title>
        <authorList>
            <consortium name="The rice annotation project (RAP)"/>
        </authorList>
    </citation>
    <scope>GENOME REANNOTATION</scope>
    <source>
        <strain>cv. Nipponbare</strain>
    </source>
</reference>
<reference key="3">
    <citation type="journal article" date="2013" name="Rice">
        <title>Improvement of the Oryza sativa Nipponbare reference genome using next generation sequence and optical map data.</title>
        <authorList>
            <person name="Kawahara Y."/>
            <person name="de la Bastide M."/>
            <person name="Hamilton J.P."/>
            <person name="Kanamori H."/>
            <person name="McCombie W.R."/>
            <person name="Ouyang S."/>
            <person name="Schwartz D.C."/>
            <person name="Tanaka T."/>
            <person name="Wu J."/>
            <person name="Zhou S."/>
            <person name="Childs K.L."/>
            <person name="Davidson R.M."/>
            <person name="Lin H."/>
            <person name="Quesada-Ocampo L."/>
            <person name="Vaillancourt B."/>
            <person name="Sakai H."/>
            <person name="Lee S.S."/>
            <person name="Kim J."/>
            <person name="Numa H."/>
            <person name="Itoh T."/>
            <person name="Buell C.R."/>
            <person name="Matsumoto T."/>
        </authorList>
    </citation>
    <scope>GENOME REANNOTATION</scope>
    <source>
        <strain>cv. Nipponbare</strain>
    </source>
</reference>
<reference key="4">
    <citation type="journal article" date="2005" name="PLoS Biol.">
        <title>The genomes of Oryza sativa: a history of duplications.</title>
        <authorList>
            <person name="Yu J."/>
            <person name="Wang J."/>
            <person name="Lin W."/>
            <person name="Li S."/>
            <person name="Li H."/>
            <person name="Zhou J."/>
            <person name="Ni P."/>
            <person name="Dong W."/>
            <person name="Hu S."/>
            <person name="Zeng C."/>
            <person name="Zhang J."/>
            <person name="Zhang Y."/>
            <person name="Li R."/>
            <person name="Xu Z."/>
            <person name="Li S."/>
            <person name="Li X."/>
            <person name="Zheng H."/>
            <person name="Cong L."/>
            <person name="Lin L."/>
            <person name="Yin J."/>
            <person name="Geng J."/>
            <person name="Li G."/>
            <person name="Shi J."/>
            <person name="Liu J."/>
            <person name="Lv H."/>
            <person name="Li J."/>
            <person name="Wang J."/>
            <person name="Deng Y."/>
            <person name="Ran L."/>
            <person name="Shi X."/>
            <person name="Wang X."/>
            <person name="Wu Q."/>
            <person name="Li C."/>
            <person name="Ren X."/>
            <person name="Wang J."/>
            <person name="Wang X."/>
            <person name="Li D."/>
            <person name="Liu D."/>
            <person name="Zhang X."/>
            <person name="Ji Z."/>
            <person name="Zhao W."/>
            <person name="Sun Y."/>
            <person name="Zhang Z."/>
            <person name="Bao J."/>
            <person name="Han Y."/>
            <person name="Dong L."/>
            <person name="Ji J."/>
            <person name="Chen P."/>
            <person name="Wu S."/>
            <person name="Liu J."/>
            <person name="Xiao Y."/>
            <person name="Bu D."/>
            <person name="Tan J."/>
            <person name="Yang L."/>
            <person name="Ye C."/>
            <person name="Zhang J."/>
            <person name="Xu J."/>
            <person name="Zhou Y."/>
            <person name="Yu Y."/>
            <person name="Zhang B."/>
            <person name="Zhuang S."/>
            <person name="Wei H."/>
            <person name="Liu B."/>
            <person name="Lei M."/>
            <person name="Yu H."/>
            <person name="Li Y."/>
            <person name="Xu H."/>
            <person name="Wei S."/>
            <person name="He X."/>
            <person name="Fang L."/>
            <person name="Zhang Z."/>
            <person name="Zhang Y."/>
            <person name="Huang X."/>
            <person name="Su Z."/>
            <person name="Tong W."/>
            <person name="Li J."/>
            <person name="Tong Z."/>
            <person name="Li S."/>
            <person name="Ye J."/>
            <person name="Wang L."/>
            <person name="Fang L."/>
            <person name="Lei T."/>
            <person name="Chen C.-S."/>
            <person name="Chen H.-C."/>
            <person name="Xu Z."/>
            <person name="Li H."/>
            <person name="Huang H."/>
            <person name="Zhang F."/>
            <person name="Xu H."/>
            <person name="Li N."/>
            <person name="Zhao C."/>
            <person name="Li S."/>
            <person name="Dong L."/>
            <person name="Huang Y."/>
            <person name="Li L."/>
            <person name="Xi Y."/>
            <person name="Qi Q."/>
            <person name="Li W."/>
            <person name="Zhang B."/>
            <person name="Hu W."/>
            <person name="Zhang Y."/>
            <person name="Tian X."/>
            <person name="Jiao Y."/>
            <person name="Liang X."/>
            <person name="Jin J."/>
            <person name="Gao L."/>
            <person name="Zheng W."/>
            <person name="Hao B."/>
            <person name="Liu S.-M."/>
            <person name="Wang W."/>
            <person name="Yuan L."/>
            <person name="Cao M."/>
            <person name="McDermott J."/>
            <person name="Samudrala R."/>
            <person name="Wang J."/>
            <person name="Wong G.K.-S."/>
            <person name="Yang H."/>
        </authorList>
    </citation>
    <scope>NUCLEOTIDE SEQUENCE [LARGE SCALE GENOMIC DNA]</scope>
    <source>
        <strain>cv. Nipponbare</strain>
    </source>
</reference>
<reference key="5">
    <citation type="submission" date="2006-10" db="EMBL/GenBank/DDBJ databases">
        <title>Oryza sativa full length cDNA.</title>
        <authorList>
            <consortium name="The rice full-length cDNA consortium"/>
        </authorList>
    </citation>
    <scope>NUCLEOTIDE SEQUENCE [LARGE SCALE MRNA]</scope>
    <source>
        <strain>cv. Nipponbare</strain>
    </source>
</reference>
<reference key="6">
    <citation type="journal article" date="2006" name="BMC Plant Biol.">
        <title>Analysis of rice glycosyl hydrolase family 1 and expression of Os4bglu12 beta-glucosidase.</title>
        <authorList>
            <person name="Opassiri R."/>
            <person name="Pomthong B."/>
            <person name="Onkoksoong T."/>
            <person name="Akiyama T."/>
            <person name="Esen A."/>
            <person name="Ketudat Cairns J.R."/>
        </authorList>
    </citation>
    <scope>GENE FAMILY</scope>
    <scope>NOMENCLATURE</scope>
</reference>
<keyword id="KW-1015">Disulfide bond</keyword>
<keyword id="KW-0325">Glycoprotein</keyword>
<keyword id="KW-0326">Glycosidase</keyword>
<keyword id="KW-0378">Hydrolase</keyword>
<keyword id="KW-1185">Reference proteome</keyword>
<keyword id="KW-0732">Signal</keyword>
<comment type="catalytic activity">
    <reaction evidence="2">
        <text>Hydrolysis of terminal, non-reducing beta-D-glucosyl residues with release of beta-D-glucose.</text>
        <dbReference type="EC" id="3.2.1.21"/>
    </reaction>
</comment>
<comment type="similarity">
    <text evidence="7">Belongs to the glycosyl hydrolase 1 family.</text>
</comment>
<comment type="sequence caution" evidence="7">
    <conflict type="frameshift">
        <sequence resource="EMBL" id="AK241587"/>
    </conflict>
</comment>
<comment type="sequence caution" evidence="7">
    <conflict type="erroneous gene model prediction">
        <sequence resource="EMBL-CDS" id="BAF19425"/>
    </conflict>
</comment>
<sequence>MELLWLLLLLLMASSTSSRSEMKAGEVIRRSQFPEDFFFGTASSAYQYEGAVREGGRGPSIWDTFTHNHPEKIANGSNGDIAIDSYHRYKEDVGIMKGLGLNAYRFSVSWPRILPNGKLSGGVNLEGIKYYNNLIDELISKGVEPFVTLFHWDSPQALEQQYGGFLSNLIVEDFRDYADICFREFGDRVKYWITFNEPWSFSIGGYSNGILAPGRCSSQGKSGCSKGDSGREPYIVAHNQLLAHAAVVQIYREKYQGGQKGKIGIAIVSNWMIPYEDSKEDKHATKRALDFMYGWFMDPLTKGDYPVSMRTLVGNRLPRFTKEQSKAINGSFDFIGLNYYTARYIQGTKQDSNSHKSYSTDSLTNERVERNGTDIGPKAGSSWLYIYPKGIEELLLYTKRTYNNPTIYITENGVDEVNNENLSLKEALIDTTRIEFYRQHLFHVQRALRQGVDVRGYFAWSLFDNFEWMDGYSVRFGINYIDYKDGLKRYPKRSSQWLQNFLHN</sequence>
<organism>
    <name type="scientific">Oryza sativa subsp. japonica</name>
    <name type="common">Rice</name>
    <dbReference type="NCBI Taxonomy" id="39947"/>
    <lineage>
        <taxon>Eukaryota</taxon>
        <taxon>Viridiplantae</taxon>
        <taxon>Streptophyta</taxon>
        <taxon>Embryophyta</taxon>
        <taxon>Tracheophyta</taxon>
        <taxon>Spermatophyta</taxon>
        <taxon>Magnoliopsida</taxon>
        <taxon>Liliopsida</taxon>
        <taxon>Poales</taxon>
        <taxon>Poaceae</taxon>
        <taxon>BOP clade</taxon>
        <taxon>Oryzoideae</taxon>
        <taxon>Oryzeae</taxon>
        <taxon>Oryzinae</taxon>
        <taxon>Oryza</taxon>
        <taxon>Oryza sativa</taxon>
    </lineage>
</organism>
<dbReference type="EC" id="3.2.1.21" evidence="2"/>
<dbReference type="EMBL" id="AP003543">
    <property type="protein sequence ID" value="BAD61620.1"/>
    <property type="molecule type" value="Genomic_DNA"/>
</dbReference>
<dbReference type="EMBL" id="AP008212">
    <property type="protein sequence ID" value="BAF19425.2"/>
    <property type="status" value="ALT_SEQ"/>
    <property type="molecule type" value="Genomic_DNA"/>
</dbReference>
<dbReference type="EMBL" id="AP014962">
    <property type="status" value="NOT_ANNOTATED_CDS"/>
    <property type="molecule type" value="Genomic_DNA"/>
</dbReference>
<dbReference type="EMBL" id="CM000143">
    <property type="protein sequence ID" value="EEE65609.1"/>
    <property type="molecule type" value="Genomic_DNA"/>
</dbReference>
<dbReference type="EMBL" id="AK241587">
    <property type="status" value="NOT_ANNOTATED_CDS"/>
    <property type="molecule type" value="mRNA"/>
</dbReference>
<dbReference type="RefSeq" id="XP_015644259.1">
    <property type="nucleotide sequence ID" value="XM_015788773.1"/>
</dbReference>
<dbReference type="SMR" id="Q5Z9Z0"/>
<dbReference type="FunCoup" id="Q5Z9Z0">
    <property type="interactions" value="551"/>
</dbReference>
<dbReference type="STRING" id="39947.Q5Z9Z0"/>
<dbReference type="CAZy" id="GH1">
    <property type="family name" value="Glycoside Hydrolase Family 1"/>
</dbReference>
<dbReference type="GlyCosmos" id="Q5Z9Z0">
    <property type="glycosylation" value="4 sites, No reported glycans"/>
</dbReference>
<dbReference type="PaxDb" id="39947-Q5Z9Z0"/>
<dbReference type="EnsemblPlants" id="Os06t0320200-02">
    <property type="protein sequence ID" value="Os06t0320200-02"/>
    <property type="gene ID" value="Os06g0320200"/>
</dbReference>
<dbReference type="Gramene" id="Os06t0320200-02">
    <property type="protein sequence ID" value="Os06t0320200-02"/>
    <property type="gene ID" value="Os06g0320200"/>
</dbReference>
<dbReference type="KEGG" id="dosa:Os06g0320200"/>
<dbReference type="eggNOG" id="KOG0626">
    <property type="taxonomic scope" value="Eukaryota"/>
</dbReference>
<dbReference type="HOGENOM" id="CLU_001859_3_0_1"/>
<dbReference type="InParanoid" id="Q5Z9Z0"/>
<dbReference type="OrthoDB" id="65569at2759"/>
<dbReference type="Proteomes" id="UP000000763">
    <property type="component" value="Chromosome 6"/>
</dbReference>
<dbReference type="Proteomes" id="UP000007752">
    <property type="component" value="Chromosome 6"/>
</dbReference>
<dbReference type="Proteomes" id="UP000059680">
    <property type="component" value="Chromosome 6"/>
</dbReference>
<dbReference type="GO" id="GO:0033907">
    <property type="term" value="F:beta-D-fucosidase activity"/>
    <property type="evidence" value="ECO:0007669"/>
    <property type="project" value="UniProtKB-ARBA"/>
</dbReference>
<dbReference type="GO" id="GO:0004565">
    <property type="term" value="F:beta-galactosidase activity"/>
    <property type="evidence" value="ECO:0007669"/>
    <property type="project" value="UniProtKB-ARBA"/>
</dbReference>
<dbReference type="GO" id="GO:0008422">
    <property type="term" value="F:beta-glucosidase activity"/>
    <property type="evidence" value="ECO:0000318"/>
    <property type="project" value="GO_Central"/>
</dbReference>
<dbReference type="GO" id="GO:0005975">
    <property type="term" value="P:carbohydrate metabolic process"/>
    <property type="evidence" value="ECO:0007669"/>
    <property type="project" value="InterPro"/>
</dbReference>
<dbReference type="FunFam" id="3.20.20.80:FF:000020">
    <property type="entry name" value="Beta-glucosidase 12"/>
    <property type="match status" value="1"/>
</dbReference>
<dbReference type="Gene3D" id="3.20.20.80">
    <property type="entry name" value="Glycosidases"/>
    <property type="match status" value="1"/>
</dbReference>
<dbReference type="InterPro" id="IPR001360">
    <property type="entry name" value="Glyco_hydro_1"/>
</dbReference>
<dbReference type="InterPro" id="IPR033132">
    <property type="entry name" value="Glyco_hydro_1_N_CS"/>
</dbReference>
<dbReference type="InterPro" id="IPR017853">
    <property type="entry name" value="Glycoside_hydrolase_SF"/>
</dbReference>
<dbReference type="PANTHER" id="PTHR10353">
    <property type="entry name" value="GLYCOSYL HYDROLASE"/>
    <property type="match status" value="1"/>
</dbReference>
<dbReference type="PANTHER" id="PTHR10353:SF137">
    <property type="entry name" value="MYROSINASE 3-RELATED"/>
    <property type="match status" value="1"/>
</dbReference>
<dbReference type="Pfam" id="PF00232">
    <property type="entry name" value="Glyco_hydro_1"/>
    <property type="match status" value="1"/>
</dbReference>
<dbReference type="PRINTS" id="PR00131">
    <property type="entry name" value="GLHYDRLASE1"/>
</dbReference>
<dbReference type="SUPFAM" id="SSF51445">
    <property type="entry name" value="(Trans)glycosidases"/>
    <property type="match status" value="1"/>
</dbReference>
<dbReference type="PROSITE" id="PS00653">
    <property type="entry name" value="GLYCOSYL_HYDROL_F1_2"/>
    <property type="match status" value="1"/>
</dbReference>
<evidence type="ECO:0000250" key="1">
    <source>
        <dbReference type="UniProtKB" id="Q1XH05"/>
    </source>
</evidence>
<evidence type="ECO:0000250" key="2">
    <source>
        <dbReference type="UniProtKB" id="Q75I94"/>
    </source>
</evidence>
<evidence type="ECO:0000250" key="3">
    <source>
        <dbReference type="UniProtKB" id="Q7XSK0"/>
    </source>
</evidence>
<evidence type="ECO:0000250" key="4">
    <source>
        <dbReference type="UniProtKB" id="Q9SPP9"/>
    </source>
</evidence>
<evidence type="ECO:0000255" key="5"/>
<evidence type="ECO:0000255" key="6">
    <source>
        <dbReference type="PROSITE-ProRule" id="PRU00498"/>
    </source>
</evidence>
<evidence type="ECO:0000305" key="7"/>
<accession>Q5Z9Z0</accession>
<accession>Q0DCJ8</accession>